<comment type="function">
    <text evidence="1">Component of the coatomer, a cytosolic protein complex that binds to dilysine motifs and reversibly associates with Golgi non-clathrin-coated vesicles, which further mediate biosynthetic protein transport from the ER, via the Golgi up to the trans Golgi network. The coatomer complex is required for budding from Golgi membranes, and is essential for the retrograde Golgi-to-ER transport of dilysine-tagged proteins. In mammals, the coatomer can only be recruited by membranes associated to ADP-ribosylation factors (ARFs), which are small GTP-binding proteins; the complex also influences the Golgi structural integrity, as well as the processing, activity, and endocytic recycling of LDL receptors (By similarity).</text>
</comment>
<comment type="subunit">
    <text>Oligomeric complex that consists of at least the alpha, beta, beta', gamma, delta, epsilon and zeta subunits.</text>
</comment>
<comment type="interaction">
    <interactant intactId="EBI-1044491">
        <id>P48444</id>
    </interactant>
    <interactant intactId="EBI-359063">
        <id>P53618</id>
        <label>COPB1</label>
    </interactant>
    <organismsDiffer>false</organismsDiffer>
    <experiments>3</experiments>
</comment>
<comment type="interaction">
    <interactant intactId="EBI-1044491">
        <id>P48444</id>
    </interactant>
    <interactant intactId="EBI-466029">
        <id>P42858</id>
        <label>HTT</label>
    </interactant>
    <organismsDiffer>false</organismsDiffer>
    <experiments>3</experiments>
</comment>
<comment type="interaction">
    <interactant intactId="EBI-1044491">
        <id>P48444</id>
    </interactant>
    <interactant intactId="EBI-12277798">
        <id>Q9BQE6-2</id>
        <label>LBHD1</label>
    </interactant>
    <organismsDiffer>false</organismsDiffer>
    <experiments>3</experiments>
</comment>
<comment type="subcellular location">
    <subcellularLocation>
        <location evidence="1">Cytoplasm</location>
    </subcellularLocation>
    <subcellularLocation>
        <location evidence="1">Golgi apparatus membrane</location>
        <topology evidence="1">Peripheral membrane protein</topology>
        <orientation evidence="1">Cytoplasmic side</orientation>
    </subcellularLocation>
    <subcellularLocation>
        <location evidence="1">Cytoplasmic vesicle</location>
        <location evidence="1">COPI-coated vesicle membrane</location>
        <topology evidence="1">Peripheral membrane protein</topology>
        <orientation evidence="1">Cytoplasmic side</orientation>
    </subcellularLocation>
    <text evidence="1">The coatomer is cytoplasmic or polymerized on the cytoplasmic side of the Golgi, as well as on the vesicles/buds originating from it.</text>
</comment>
<comment type="alternative products">
    <event type="alternative splicing"/>
    <isoform>
        <id>P48444-1</id>
        <name>1</name>
        <sequence type="displayed"/>
    </isoform>
    <isoform>
        <id>P48444-2</id>
        <name>2</name>
        <sequence type="described" ref="VSP_045636"/>
    </isoform>
</comment>
<comment type="tissue specificity">
    <text>Ubiquitously expressed.</text>
</comment>
<comment type="disease" evidence="5">
    <disease id="DI-04856">
        <name>Short stature-micrognathia syndrome</name>
        <acronym>SSMG</acronym>
        <description>An autosomal dominant disorder characterized by facial dysmorphism, severe micrognathia, microcephaly, rhizomelic short stature, and mild developmental delay.</description>
        <dbReference type="MIM" id="617164"/>
    </disease>
    <text evidence="5">The disease is caused by variants affecting the gene represented in this entry. the skeletal phenotype, that characterizes this disorder, may be due to defective type I collagen transport and reduction of collagen secretion.</text>
</comment>
<comment type="similarity">
    <text evidence="7">Belongs to the adaptor complexes medium subunit family. Delta-COP subfamily.</text>
</comment>
<comment type="sequence caution" evidence="7">
    <conflict type="erroneous initiation">
        <sequence resource="EMBL-CDS" id="CAA57072"/>
    </conflict>
</comment>
<organism>
    <name type="scientific">Homo sapiens</name>
    <name type="common">Human</name>
    <dbReference type="NCBI Taxonomy" id="9606"/>
    <lineage>
        <taxon>Eukaryota</taxon>
        <taxon>Metazoa</taxon>
        <taxon>Chordata</taxon>
        <taxon>Craniata</taxon>
        <taxon>Vertebrata</taxon>
        <taxon>Euteleostomi</taxon>
        <taxon>Mammalia</taxon>
        <taxon>Eutheria</taxon>
        <taxon>Euarchontoglires</taxon>
        <taxon>Primates</taxon>
        <taxon>Haplorrhini</taxon>
        <taxon>Catarrhini</taxon>
        <taxon>Hominidae</taxon>
        <taxon>Homo</taxon>
    </lineage>
</organism>
<feature type="initiator methionine" description="Removed" evidence="11">
    <location>
        <position position="1"/>
    </location>
</feature>
<feature type="chain" id="PRO_0000193841" description="Coatomer subunit delta">
    <location>
        <begin position="2"/>
        <end position="511"/>
    </location>
</feature>
<feature type="domain" description="MHD" evidence="3">
    <location>
        <begin position="271"/>
        <end position="511"/>
    </location>
</feature>
<feature type="region of interest" description="Disordered" evidence="4">
    <location>
        <begin position="168"/>
        <end position="188"/>
    </location>
</feature>
<feature type="compositionally biased region" description="Basic and acidic residues" evidence="4">
    <location>
        <begin position="168"/>
        <end position="177"/>
    </location>
</feature>
<feature type="modified residue" description="Phosphoserine" evidence="12">
    <location>
        <position position="223"/>
    </location>
</feature>
<feature type="modified residue" description="N6-acetyllysine" evidence="8">
    <location>
        <position position="233"/>
    </location>
</feature>
<feature type="modified residue" description="N6-acetyllysine" evidence="2">
    <location>
        <position position="241"/>
    </location>
</feature>
<feature type="modified residue" description="Phosphoserine" evidence="12">
    <location>
        <position position="244"/>
    </location>
</feature>
<feature type="modified residue" description="N6-acetyllysine" evidence="8">
    <location>
        <position position="309"/>
    </location>
</feature>
<feature type="modified residue" description="N6-acetyllysine" evidence="2">
    <location>
        <position position="351"/>
    </location>
</feature>
<feature type="modified residue" description="Phosphoserine" evidence="9 10 12">
    <location>
        <position position="493"/>
    </location>
</feature>
<feature type="splice variant" id="VSP_045636" description="In isoform 2." evidence="6">
    <original>MVLLAAAVCTKAGKAIVSRQFVEMTRTRIEGLLAAFPKLMNTGKQHTFVETESVRYVYQPMEKLYMVLITTKNSNILEDLETLRLFSRV</original>
    <variation>M</variation>
    <location>
        <begin position="1"/>
        <end position="89"/>
    </location>
</feature>
<feature type="sequence variant" id="VAR_011788" description="In dbSNP:rs682327.">
    <original>F</original>
    <variation>L</variation>
    <location>
        <position position="186"/>
    </location>
</feature>
<feature type="sequence variant" id="VAR_011789" description="In dbSNP:rs1063124.">
    <original>K</original>
    <variation>N</variation>
    <location>
        <position position="309"/>
    </location>
</feature>
<feature type="sequence conflict" description="In Ref. 2; BAG64934." evidence="7" ref="2">
    <original>N</original>
    <variation>D</variation>
    <location>
        <position position="387"/>
    </location>
</feature>
<dbReference type="EMBL" id="X81197">
    <property type="protein sequence ID" value="CAA57071.1"/>
    <property type="molecule type" value="mRNA"/>
</dbReference>
<dbReference type="EMBL" id="X81198">
    <property type="protein sequence ID" value="CAA57072.1"/>
    <property type="status" value="ALT_INIT"/>
    <property type="molecule type" value="mRNA"/>
</dbReference>
<dbReference type="EMBL" id="AK304019">
    <property type="protein sequence ID" value="BAG64934.1"/>
    <property type="molecule type" value="mRNA"/>
</dbReference>
<dbReference type="EMBL" id="AP000941">
    <property type="status" value="NOT_ANNOTATED_CDS"/>
    <property type="molecule type" value="Genomic_DNA"/>
</dbReference>
<dbReference type="EMBL" id="BC093636">
    <property type="protein sequence ID" value="AAH93636.1"/>
    <property type="molecule type" value="mRNA"/>
</dbReference>
<dbReference type="EMBL" id="BC093638">
    <property type="protein sequence ID" value="AAH93638.1"/>
    <property type="molecule type" value="mRNA"/>
</dbReference>
<dbReference type="CCDS" id="CCDS44749.1">
    <molecule id="P48444-2"/>
</dbReference>
<dbReference type="CCDS" id="CCDS8400.1">
    <molecule id="P48444-1"/>
</dbReference>
<dbReference type="PIR" id="A56750">
    <property type="entry name" value="A56750"/>
</dbReference>
<dbReference type="RefSeq" id="NP_001135753.1">
    <molecule id="P48444-2"/>
    <property type="nucleotide sequence ID" value="NM_001142281.2"/>
</dbReference>
<dbReference type="RefSeq" id="NP_001646.2">
    <molecule id="P48444-1"/>
    <property type="nucleotide sequence ID" value="NM_001655.4"/>
</dbReference>
<dbReference type="SMR" id="P48444"/>
<dbReference type="BioGRID" id="106867">
    <property type="interactions" value="250"/>
</dbReference>
<dbReference type="ComplexPortal" id="CPX-7803">
    <property type="entry name" value="COPI vesicle coat complex, COPG1-COPZ1 variant"/>
</dbReference>
<dbReference type="ComplexPortal" id="CPX-7969">
    <property type="entry name" value="COPI vesicle coat complex, COPG2-COPZ1 variant"/>
</dbReference>
<dbReference type="ComplexPortal" id="CPX-7970">
    <property type="entry name" value="COPI vesicle coat complex, COPG1-COPZ2 variant"/>
</dbReference>
<dbReference type="DIP" id="DIP-50375N"/>
<dbReference type="FunCoup" id="P48444">
    <property type="interactions" value="3510"/>
</dbReference>
<dbReference type="IntAct" id="P48444">
    <property type="interactions" value="91"/>
</dbReference>
<dbReference type="MINT" id="P48444"/>
<dbReference type="STRING" id="9606.ENSP00000264028"/>
<dbReference type="GlyCosmos" id="P48444">
    <property type="glycosylation" value="5 sites, 1 glycan"/>
</dbReference>
<dbReference type="GlyGen" id="P48444">
    <property type="glycosylation" value="6 sites, 1 O-linked glycan (6 sites)"/>
</dbReference>
<dbReference type="iPTMnet" id="P48444"/>
<dbReference type="MetOSite" id="P48444"/>
<dbReference type="PhosphoSitePlus" id="P48444"/>
<dbReference type="SwissPalm" id="P48444"/>
<dbReference type="BioMuta" id="ARCN1"/>
<dbReference type="DMDM" id="1351970"/>
<dbReference type="OGP" id="P48444"/>
<dbReference type="jPOST" id="P48444"/>
<dbReference type="MassIVE" id="P48444"/>
<dbReference type="PaxDb" id="9606-ENSP00000264028"/>
<dbReference type="PeptideAtlas" id="P48444"/>
<dbReference type="ProteomicsDB" id="19961"/>
<dbReference type="ProteomicsDB" id="55891">
    <molecule id="P48444-1"/>
</dbReference>
<dbReference type="Pumba" id="P48444"/>
<dbReference type="Antibodypedia" id="32504">
    <property type="antibodies" value="217 antibodies from 24 providers"/>
</dbReference>
<dbReference type="DNASU" id="372"/>
<dbReference type="Ensembl" id="ENST00000264028.5">
    <molecule id="P48444-1"/>
    <property type="protein sequence ID" value="ENSP00000264028.4"/>
    <property type="gene ID" value="ENSG00000095139.15"/>
</dbReference>
<dbReference type="Ensembl" id="ENST00000392859.7">
    <molecule id="P48444-2"/>
    <property type="protein sequence ID" value="ENSP00000376599.3"/>
    <property type="gene ID" value="ENSG00000095139.15"/>
</dbReference>
<dbReference type="GeneID" id="372"/>
<dbReference type="KEGG" id="hsa:372"/>
<dbReference type="MANE-Select" id="ENST00000264028.5">
    <property type="protein sequence ID" value="ENSP00000264028.4"/>
    <property type="RefSeq nucleotide sequence ID" value="NM_001655.5"/>
    <property type="RefSeq protein sequence ID" value="NP_001646.2"/>
</dbReference>
<dbReference type="UCSC" id="uc001ptq.4">
    <molecule id="P48444-1"/>
    <property type="organism name" value="human"/>
</dbReference>
<dbReference type="AGR" id="HGNC:649"/>
<dbReference type="CTD" id="372"/>
<dbReference type="DisGeNET" id="372"/>
<dbReference type="GeneCards" id="ARCN1"/>
<dbReference type="HGNC" id="HGNC:649">
    <property type="gene designation" value="ARCN1"/>
</dbReference>
<dbReference type="HPA" id="ENSG00000095139">
    <property type="expression patterns" value="Low tissue specificity"/>
</dbReference>
<dbReference type="MalaCards" id="ARCN1"/>
<dbReference type="MIM" id="600820">
    <property type="type" value="gene"/>
</dbReference>
<dbReference type="MIM" id="617164">
    <property type="type" value="phenotype"/>
</dbReference>
<dbReference type="neXtProt" id="NX_P48444"/>
<dbReference type="OpenTargets" id="ENSG00000095139"/>
<dbReference type="Orphanet" id="659702">
    <property type="disease" value="Intrauterine growth retardation-micrognathia-short stature-facial dysmorphism-rhizomelic shortening syndrome"/>
</dbReference>
<dbReference type="PharmGKB" id="PA24931"/>
<dbReference type="VEuPathDB" id="HostDB:ENSG00000095139"/>
<dbReference type="eggNOG" id="KOG2635">
    <property type="taxonomic scope" value="Eukaryota"/>
</dbReference>
<dbReference type="GeneTree" id="ENSGT00390000017207"/>
<dbReference type="HOGENOM" id="CLU_019988_2_0_1"/>
<dbReference type="InParanoid" id="P48444"/>
<dbReference type="OMA" id="VQFRTHP"/>
<dbReference type="OrthoDB" id="10266042at2759"/>
<dbReference type="PAN-GO" id="P48444">
    <property type="GO annotations" value="4 GO annotations based on evolutionary models"/>
</dbReference>
<dbReference type="PhylomeDB" id="P48444"/>
<dbReference type="TreeFam" id="TF105760"/>
<dbReference type="PathwayCommons" id="P48444"/>
<dbReference type="Reactome" id="R-HSA-6807878">
    <property type="pathway name" value="COPI-mediated anterograde transport"/>
</dbReference>
<dbReference type="Reactome" id="R-HSA-6811434">
    <property type="pathway name" value="COPI-dependent Golgi-to-ER retrograde traffic"/>
</dbReference>
<dbReference type="SignaLink" id="P48444"/>
<dbReference type="BioGRID-ORCS" id="372">
    <property type="hits" value="799 hits in 1156 CRISPR screens"/>
</dbReference>
<dbReference type="CD-CODE" id="FB4E32DD">
    <property type="entry name" value="Presynaptic clusters and postsynaptic densities"/>
</dbReference>
<dbReference type="ChiTaRS" id="ARCN1">
    <property type="organism name" value="human"/>
</dbReference>
<dbReference type="GenomeRNAi" id="372"/>
<dbReference type="Pharos" id="P48444">
    <property type="development level" value="Tbio"/>
</dbReference>
<dbReference type="PRO" id="PR:P48444"/>
<dbReference type="Proteomes" id="UP000005640">
    <property type="component" value="Chromosome 11"/>
</dbReference>
<dbReference type="RNAct" id="P48444">
    <property type="molecule type" value="protein"/>
</dbReference>
<dbReference type="Bgee" id="ENSG00000095139">
    <property type="expression patterns" value="Expressed in islet of Langerhans and 206 other cell types or tissues"/>
</dbReference>
<dbReference type="ExpressionAtlas" id="P48444">
    <property type="expression patterns" value="baseline and differential"/>
</dbReference>
<dbReference type="GO" id="GO:0030126">
    <property type="term" value="C:COPI vesicle coat"/>
    <property type="evidence" value="ECO:0000250"/>
    <property type="project" value="UniProtKB"/>
</dbReference>
<dbReference type="GO" id="GO:0005829">
    <property type="term" value="C:cytosol"/>
    <property type="evidence" value="ECO:0000304"/>
    <property type="project" value="Reactome"/>
</dbReference>
<dbReference type="GO" id="GO:0005789">
    <property type="term" value="C:endoplasmic reticulum membrane"/>
    <property type="evidence" value="ECO:0000304"/>
    <property type="project" value="Reactome"/>
</dbReference>
<dbReference type="GO" id="GO:0000139">
    <property type="term" value="C:Golgi membrane"/>
    <property type="evidence" value="ECO:0000304"/>
    <property type="project" value="Reactome"/>
</dbReference>
<dbReference type="GO" id="GO:0016020">
    <property type="term" value="C:membrane"/>
    <property type="evidence" value="ECO:0007005"/>
    <property type="project" value="UniProtKB"/>
</dbReference>
<dbReference type="GO" id="GO:0030133">
    <property type="term" value="C:transport vesicle"/>
    <property type="evidence" value="ECO:0000304"/>
    <property type="project" value="Reactome"/>
</dbReference>
<dbReference type="GO" id="GO:0003723">
    <property type="term" value="F:RNA binding"/>
    <property type="evidence" value="ECO:0007005"/>
    <property type="project" value="UniProtKB"/>
</dbReference>
<dbReference type="GO" id="GO:0008344">
    <property type="term" value="P:adult locomotory behavior"/>
    <property type="evidence" value="ECO:0007669"/>
    <property type="project" value="Ensembl"/>
</dbReference>
<dbReference type="GO" id="GO:0021691">
    <property type="term" value="P:cerebellar Purkinje cell layer maturation"/>
    <property type="evidence" value="ECO:0007669"/>
    <property type="project" value="Ensembl"/>
</dbReference>
<dbReference type="GO" id="GO:0006888">
    <property type="term" value="P:endoplasmic reticulum to Golgi vesicle-mediated transport"/>
    <property type="evidence" value="ECO:0000318"/>
    <property type="project" value="GO_Central"/>
</dbReference>
<dbReference type="GO" id="GO:0051645">
    <property type="term" value="P:Golgi localization"/>
    <property type="evidence" value="ECO:0000318"/>
    <property type="project" value="GO_Central"/>
</dbReference>
<dbReference type="GO" id="GO:0006886">
    <property type="term" value="P:intracellular protein transport"/>
    <property type="evidence" value="ECO:0000304"/>
    <property type="project" value="ProtInc"/>
</dbReference>
<dbReference type="GO" id="GO:0043473">
    <property type="term" value="P:pigmentation"/>
    <property type="evidence" value="ECO:0007669"/>
    <property type="project" value="Ensembl"/>
</dbReference>
<dbReference type="GO" id="GO:0006890">
    <property type="term" value="P:retrograde vesicle-mediated transport, Golgi to endoplasmic reticulum"/>
    <property type="evidence" value="ECO:0000318"/>
    <property type="project" value="GO_Central"/>
</dbReference>
<dbReference type="CDD" id="cd09254">
    <property type="entry name" value="AP_delta-COPI_MHD"/>
    <property type="match status" value="1"/>
</dbReference>
<dbReference type="CDD" id="cd14830">
    <property type="entry name" value="Delta_COP_N"/>
    <property type="match status" value="1"/>
</dbReference>
<dbReference type="FunFam" id="2.60.40.1170:FF:000007">
    <property type="entry name" value="Coatomer subunit delta"/>
    <property type="match status" value="1"/>
</dbReference>
<dbReference type="FunFam" id="2.60.40.1170:FF:000011">
    <property type="entry name" value="Coatomer subunit delta"/>
    <property type="match status" value="1"/>
</dbReference>
<dbReference type="FunFam" id="3.30.450.60:FF:000003">
    <property type="entry name" value="Coatomer subunit delta"/>
    <property type="match status" value="1"/>
</dbReference>
<dbReference type="Gene3D" id="3.30.450.60">
    <property type="match status" value="1"/>
</dbReference>
<dbReference type="Gene3D" id="2.60.40.1170">
    <property type="entry name" value="Mu homology domain, subdomain B"/>
    <property type="match status" value="2"/>
</dbReference>
<dbReference type="InterPro" id="IPR036168">
    <property type="entry name" value="AP2_Mu_C_sf"/>
</dbReference>
<dbReference type="InterPro" id="IPR022775">
    <property type="entry name" value="AP_mu_sigma_su"/>
</dbReference>
<dbReference type="InterPro" id="IPR027059">
    <property type="entry name" value="Coatomer_dsu"/>
</dbReference>
<dbReference type="InterPro" id="IPR011012">
    <property type="entry name" value="Longin-like_dom_sf"/>
</dbReference>
<dbReference type="InterPro" id="IPR028565">
    <property type="entry name" value="MHD"/>
</dbReference>
<dbReference type="PANTHER" id="PTHR10121">
    <property type="entry name" value="COATOMER SUBUNIT DELTA"/>
    <property type="match status" value="1"/>
</dbReference>
<dbReference type="PANTHER" id="PTHR10121:SF0">
    <property type="entry name" value="COATOMER SUBUNIT DELTA"/>
    <property type="match status" value="1"/>
</dbReference>
<dbReference type="Pfam" id="PF00928">
    <property type="entry name" value="Adap_comp_sub"/>
    <property type="match status" value="1"/>
</dbReference>
<dbReference type="Pfam" id="PF01217">
    <property type="entry name" value="Clat_adaptor_s"/>
    <property type="match status" value="1"/>
</dbReference>
<dbReference type="SUPFAM" id="SSF49447">
    <property type="entry name" value="Second domain of Mu2 adaptin subunit (ap50) of ap2 adaptor"/>
    <property type="match status" value="1"/>
</dbReference>
<dbReference type="SUPFAM" id="SSF64356">
    <property type="entry name" value="SNARE-like"/>
    <property type="match status" value="1"/>
</dbReference>
<dbReference type="PROSITE" id="PS51072">
    <property type="entry name" value="MHD"/>
    <property type="match status" value="1"/>
</dbReference>
<gene>
    <name type="primary">ARCN1</name>
    <name type="synonym">COPD</name>
</gene>
<reference key="1">
    <citation type="journal article" date="1995" name="Genomics">
        <title>The human archain gene, ARCN1, has highly conserved homologs in rice and Drosophila.</title>
        <authorList>
            <person name="Radice P."/>
            <person name="Pensotti V."/>
            <person name="Jones C."/>
            <person name="Perry H."/>
            <person name="Pierotti M.A."/>
            <person name="Tunnacliffe A."/>
        </authorList>
    </citation>
    <scope>NUCLEOTIDE SEQUENCE [MRNA] (ISOFORM 1)</scope>
</reference>
<reference key="2">
    <citation type="journal article" date="2004" name="Nat. Genet.">
        <title>Complete sequencing and characterization of 21,243 full-length human cDNAs.</title>
        <authorList>
            <person name="Ota T."/>
            <person name="Suzuki Y."/>
            <person name="Nishikawa T."/>
            <person name="Otsuki T."/>
            <person name="Sugiyama T."/>
            <person name="Irie R."/>
            <person name="Wakamatsu A."/>
            <person name="Hayashi K."/>
            <person name="Sato H."/>
            <person name="Nagai K."/>
            <person name="Kimura K."/>
            <person name="Makita H."/>
            <person name="Sekine M."/>
            <person name="Obayashi M."/>
            <person name="Nishi T."/>
            <person name="Shibahara T."/>
            <person name="Tanaka T."/>
            <person name="Ishii S."/>
            <person name="Yamamoto J."/>
            <person name="Saito K."/>
            <person name="Kawai Y."/>
            <person name="Isono Y."/>
            <person name="Nakamura Y."/>
            <person name="Nagahari K."/>
            <person name="Murakami K."/>
            <person name="Yasuda T."/>
            <person name="Iwayanagi T."/>
            <person name="Wagatsuma M."/>
            <person name="Shiratori A."/>
            <person name="Sudo H."/>
            <person name="Hosoiri T."/>
            <person name="Kaku Y."/>
            <person name="Kodaira H."/>
            <person name="Kondo H."/>
            <person name="Sugawara M."/>
            <person name="Takahashi M."/>
            <person name="Kanda K."/>
            <person name="Yokoi T."/>
            <person name="Furuya T."/>
            <person name="Kikkawa E."/>
            <person name="Omura Y."/>
            <person name="Abe K."/>
            <person name="Kamihara K."/>
            <person name="Katsuta N."/>
            <person name="Sato K."/>
            <person name="Tanikawa M."/>
            <person name="Yamazaki M."/>
            <person name="Ninomiya K."/>
            <person name="Ishibashi T."/>
            <person name="Yamashita H."/>
            <person name="Murakawa K."/>
            <person name="Fujimori K."/>
            <person name="Tanai H."/>
            <person name="Kimata M."/>
            <person name="Watanabe M."/>
            <person name="Hiraoka S."/>
            <person name="Chiba Y."/>
            <person name="Ishida S."/>
            <person name="Ono Y."/>
            <person name="Takiguchi S."/>
            <person name="Watanabe S."/>
            <person name="Yosida M."/>
            <person name="Hotuta T."/>
            <person name="Kusano J."/>
            <person name="Kanehori K."/>
            <person name="Takahashi-Fujii A."/>
            <person name="Hara H."/>
            <person name="Tanase T.-O."/>
            <person name="Nomura Y."/>
            <person name="Togiya S."/>
            <person name="Komai F."/>
            <person name="Hara R."/>
            <person name="Takeuchi K."/>
            <person name="Arita M."/>
            <person name="Imose N."/>
            <person name="Musashino K."/>
            <person name="Yuuki H."/>
            <person name="Oshima A."/>
            <person name="Sasaki N."/>
            <person name="Aotsuka S."/>
            <person name="Yoshikawa Y."/>
            <person name="Matsunawa H."/>
            <person name="Ichihara T."/>
            <person name="Shiohata N."/>
            <person name="Sano S."/>
            <person name="Moriya S."/>
            <person name="Momiyama H."/>
            <person name="Satoh N."/>
            <person name="Takami S."/>
            <person name="Terashima Y."/>
            <person name="Suzuki O."/>
            <person name="Nakagawa S."/>
            <person name="Senoh A."/>
            <person name="Mizoguchi H."/>
            <person name="Goto Y."/>
            <person name="Shimizu F."/>
            <person name="Wakebe H."/>
            <person name="Hishigaki H."/>
            <person name="Watanabe T."/>
            <person name="Sugiyama A."/>
            <person name="Takemoto M."/>
            <person name="Kawakami B."/>
            <person name="Yamazaki M."/>
            <person name="Watanabe K."/>
            <person name="Kumagai A."/>
            <person name="Itakura S."/>
            <person name="Fukuzumi Y."/>
            <person name="Fujimori Y."/>
            <person name="Komiyama M."/>
            <person name="Tashiro H."/>
            <person name="Tanigami A."/>
            <person name="Fujiwara T."/>
            <person name="Ono T."/>
            <person name="Yamada K."/>
            <person name="Fujii Y."/>
            <person name="Ozaki K."/>
            <person name="Hirao M."/>
            <person name="Ohmori Y."/>
            <person name="Kawabata A."/>
            <person name="Hikiji T."/>
            <person name="Kobatake N."/>
            <person name="Inagaki H."/>
            <person name="Ikema Y."/>
            <person name="Okamoto S."/>
            <person name="Okitani R."/>
            <person name="Kawakami T."/>
            <person name="Noguchi S."/>
            <person name="Itoh T."/>
            <person name="Shigeta K."/>
            <person name="Senba T."/>
            <person name="Matsumura K."/>
            <person name="Nakajima Y."/>
            <person name="Mizuno T."/>
            <person name="Morinaga M."/>
            <person name="Sasaki M."/>
            <person name="Togashi T."/>
            <person name="Oyama M."/>
            <person name="Hata H."/>
            <person name="Watanabe M."/>
            <person name="Komatsu T."/>
            <person name="Mizushima-Sugano J."/>
            <person name="Satoh T."/>
            <person name="Shirai Y."/>
            <person name="Takahashi Y."/>
            <person name="Nakagawa K."/>
            <person name="Okumura K."/>
            <person name="Nagase T."/>
            <person name="Nomura N."/>
            <person name="Kikuchi H."/>
            <person name="Masuho Y."/>
            <person name="Yamashita R."/>
            <person name="Nakai K."/>
            <person name="Yada T."/>
            <person name="Nakamura Y."/>
            <person name="Ohara O."/>
            <person name="Isogai T."/>
            <person name="Sugano S."/>
        </authorList>
    </citation>
    <scope>NUCLEOTIDE SEQUENCE [LARGE SCALE MRNA] (ISOFORM 2)</scope>
    <source>
        <tissue>Trachea</tissue>
    </source>
</reference>
<reference key="3">
    <citation type="journal article" date="2006" name="Nature">
        <title>Human chromosome 11 DNA sequence and analysis including novel gene identification.</title>
        <authorList>
            <person name="Taylor T.D."/>
            <person name="Noguchi H."/>
            <person name="Totoki Y."/>
            <person name="Toyoda A."/>
            <person name="Kuroki Y."/>
            <person name="Dewar K."/>
            <person name="Lloyd C."/>
            <person name="Itoh T."/>
            <person name="Takeda T."/>
            <person name="Kim D.-W."/>
            <person name="She X."/>
            <person name="Barlow K.F."/>
            <person name="Bloom T."/>
            <person name="Bruford E."/>
            <person name="Chang J.L."/>
            <person name="Cuomo C.A."/>
            <person name="Eichler E."/>
            <person name="FitzGerald M.G."/>
            <person name="Jaffe D.B."/>
            <person name="LaButti K."/>
            <person name="Nicol R."/>
            <person name="Park H.-S."/>
            <person name="Seaman C."/>
            <person name="Sougnez C."/>
            <person name="Yang X."/>
            <person name="Zimmer A.R."/>
            <person name="Zody M.C."/>
            <person name="Birren B.W."/>
            <person name="Nusbaum C."/>
            <person name="Fujiyama A."/>
            <person name="Hattori M."/>
            <person name="Rogers J."/>
            <person name="Lander E.S."/>
            <person name="Sakaki Y."/>
        </authorList>
    </citation>
    <scope>NUCLEOTIDE SEQUENCE [LARGE SCALE GENOMIC DNA]</scope>
</reference>
<reference key="4">
    <citation type="journal article" date="2004" name="Genome Res.">
        <title>The status, quality, and expansion of the NIH full-length cDNA project: the Mammalian Gene Collection (MGC).</title>
        <authorList>
            <consortium name="The MGC Project Team"/>
        </authorList>
    </citation>
    <scope>NUCLEOTIDE SEQUENCE [LARGE SCALE MRNA] (ISOFORM 1)</scope>
    <source>
        <tissue>Brain</tissue>
    </source>
</reference>
<reference key="5">
    <citation type="journal article" date="2009" name="Science">
        <title>Lysine acetylation targets protein complexes and co-regulates major cellular functions.</title>
        <authorList>
            <person name="Choudhary C."/>
            <person name="Kumar C."/>
            <person name="Gnad F."/>
            <person name="Nielsen M.L."/>
            <person name="Rehman M."/>
            <person name="Walther T.C."/>
            <person name="Olsen J.V."/>
            <person name="Mann M."/>
        </authorList>
    </citation>
    <scope>ACETYLATION [LARGE SCALE ANALYSIS] AT LYS-233 AND LYS-309</scope>
    <scope>IDENTIFICATION BY MASS SPECTROMETRY [LARGE SCALE ANALYSIS]</scope>
</reference>
<reference key="6">
    <citation type="journal article" date="2010" name="Sci. Signal.">
        <title>Quantitative phosphoproteomics reveals widespread full phosphorylation site occupancy during mitosis.</title>
        <authorList>
            <person name="Olsen J.V."/>
            <person name="Vermeulen M."/>
            <person name="Santamaria A."/>
            <person name="Kumar C."/>
            <person name="Miller M.L."/>
            <person name="Jensen L.J."/>
            <person name="Gnad F."/>
            <person name="Cox J."/>
            <person name="Jensen T.S."/>
            <person name="Nigg E.A."/>
            <person name="Brunak S."/>
            <person name="Mann M."/>
        </authorList>
    </citation>
    <scope>PHOSPHORYLATION [LARGE SCALE ANALYSIS] AT SER-493</scope>
    <scope>IDENTIFICATION BY MASS SPECTROMETRY [LARGE SCALE ANALYSIS]</scope>
    <source>
        <tissue>Cervix carcinoma</tissue>
    </source>
</reference>
<reference key="7">
    <citation type="journal article" date="2011" name="BMC Syst. Biol.">
        <title>Initial characterization of the human central proteome.</title>
        <authorList>
            <person name="Burkard T.R."/>
            <person name="Planyavsky M."/>
            <person name="Kaupe I."/>
            <person name="Breitwieser F.P."/>
            <person name="Buerckstuemmer T."/>
            <person name="Bennett K.L."/>
            <person name="Superti-Furga G."/>
            <person name="Colinge J."/>
        </authorList>
    </citation>
    <scope>IDENTIFICATION BY MASS SPECTROMETRY [LARGE SCALE ANALYSIS]</scope>
</reference>
<reference key="8">
    <citation type="journal article" date="2011" name="Sci. Signal.">
        <title>System-wide temporal characterization of the proteome and phosphoproteome of human embryonic stem cell differentiation.</title>
        <authorList>
            <person name="Rigbolt K.T."/>
            <person name="Prokhorova T.A."/>
            <person name="Akimov V."/>
            <person name="Henningsen J."/>
            <person name="Johansen P.T."/>
            <person name="Kratchmarova I."/>
            <person name="Kassem M."/>
            <person name="Mann M."/>
            <person name="Olsen J.V."/>
            <person name="Blagoev B."/>
        </authorList>
    </citation>
    <scope>PHOSPHORYLATION [LARGE SCALE ANALYSIS] AT SER-493</scope>
    <scope>IDENTIFICATION BY MASS SPECTROMETRY [LARGE SCALE ANALYSIS]</scope>
</reference>
<reference key="9">
    <citation type="journal article" date="2012" name="Mol. Cell. Proteomics">
        <title>Comparative large-scale characterisation of plant vs. mammal proteins reveals similar and idiosyncratic N-alpha acetylation features.</title>
        <authorList>
            <person name="Bienvenut W.V."/>
            <person name="Sumpton D."/>
            <person name="Martinez A."/>
            <person name="Lilla S."/>
            <person name="Espagne C."/>
            <person name="Meinnel T."/>
            <person name="Giglione C."/>
        </authorList>
    </citation>
    <scope>CLEAVAGE OF INITIATOR METHIONINE [LARGE SCALE ANALYSIS]</scope>
    <scope>IDENTIFICATION BY MASS SPECTROMETRY [LARGE SCALE ANALYSIS]</scope>
</reference>
<reference key="10">
    <citation type="journal article" date="2013" name="J. Proteome Res.">
        <title>Toward a comprehensive characterization of a human cancer cell phosphoproteome.</title>
        <authorList>
            <person name="Zhou H."/>
            <person name="Di Palma S."/>
            <person name="Preisinger C."/>
            <person name="Peng M."/>
            <person name="Polat A.N."/>
            <person name="Heck A.J."/>
            <person name="Mohammed S."/>
        </authorList>
    </citation>
    <scope>PHOSPHORYLATION [LARGE SCALE ANALYSIS] AT SER-223; SER-244 AND SER-493</scope>
    <scope>IDENTIFICATION BY MASS SPECTROMETRY [LARGE SCALE ANALYSIS]</scope>
    <source>
        <tissue>Cervix carcinoma</tissue>
        <tissue>Erythroleukemia</tissue>
    </source>
</reference>
<reference key="11">
    <citation type="journal article" date="2014" name="J. Proteomics">
        <title>An enzyme assisted RP-RPLC approach for in-depth analysis of human liver phosphoproteome.</title>
        <authorList>
            <person name="Bian Y."/>
            <person name="Song C."/>
            <person name="Cheng K."/>
            <person name="Dong M."/>
            <person name="Wang F."/>
            <person name="Huang J."/>
            <person name="Sun D."/>
            <person name="Wang L."/>
            <person name="Ye M."/>
            <person name="Zou H."/>
        </authorList>
    </citation>
    <scope>IDENTIFICATION BY MASS SPECTROMETRY [LARGE SCALE ANALYSIS]</scope>
    <source>
        <tissue>Liver</tissue>
    </source>
</reference>
<reference key="12">
    <citation type="journal article" date="2015" name="Proteomics">
        <title>N-terminome analysis of the human mitochondrial proteome.</title>
        <authorList>
            <person name="Vaca Jacome A.S."/>
            <person name="Rabilloud T."/>
            <person name="Schaeffer-Reiss C."/>
            <person name="Rompais M."/>
            <person name="Ayoub D."/>
            <person name="Lane L."/>
            <person name="Bairoch A."/>
            <person name="Van Dorsselaer A."/>
            <person name="Carapito C."/>
        </authorList>
    </citation>
    <scope>IDENTIFICATION BY MASS SPECTROMETRY [LARGE SCALE ANALYSIS]</scope>
</reference>
<reference key="13">
    <citation type="journal article" date="2016" name="Am. J. Hum. Genet.">
        <title>ARCN1 mutations cause a recognizable craniofacial syndrome due to copi-mediated transport defects.</title>
        <authorList>
            <person name="Izumi K."/>
            <person name="Brett M."/>
            <person name="Nishi E."/>
            <person name="Drunat S."/>
            <person name="Tan E.S."/>
            <person name="Fujiki K."/>
            <person name="Lebon S."/>
            <person name="Cham B."/>
            <person name="Masuda K."/>
            <person name="Arakawa M."/>
            <person name="Jacquinet A."/>
            <person name="Yamazumi Y."/>
            <person name="Chen S.T."/>
            <person name="Verloes A."/>
            <person name="Okada Y."/>
            <person name="Katou Y."/>
            <person name="Nakamura T."/>
            <person name="Akiyama T."/>
            <person name="Gressens P."/>
            <person name="Foo R."/>
            <person name="Passemard S."/>
            <person name="Tan E.C."/>
            <person name="El Ghouzzi V."/>
            <person name="Shirahige K."/>
        </authorList>
    </citation>
    <scope>INVOLVEMENT IN SSMG</scope>
</reference>
<name>COPD_HUMAN</name>
<evidence type="ECO:0000250" key="1"/>
<evidence type="ECO:0000250" key="2">
    <source>
        <dbReference type="UniProtKB" id="Q5XJY5"/>
    </source>
</evidence>
<evidence type="ECO:0000255" key="3">
    <source>
        <dbReference type="PROSITE-ProRule" id="PRU00404"/>
    </source>
</evidence>
<evidence type="ECO:0000256" key="4">
    <source>
        <dbReference type="SAM" id="MobiDB-lite"/>
    </source>
</evidence>
<evidence type="ECO:0000269" key="5">
    <source>
    </source>
</evidence>
<evidence type="ECO:0000303" key="6">
    <source>
    </source>
</evidence>
<evidence type="ECO:0000305" key="7"/>
<evidence type="ECO:0007744" key="8">
    <source>
    </source>
</evidence>
<evidence type="ECO:0007744" key="9">
    <source>
    </source>
</evidence>
<evidence type="ECO:0007744" key="10">
    <source>
    </source>
</evidence>
<evidence type="ECO:0007744" key="11">
    <source>
    </source>
</evidence>
<evidence type="ECO:0007744" key="12">
    <source>
    </source>
</evidence>
<protein>
    <recommendedName>
        <fullName>Coatomer subunit delta</fullName>
    </recommendedName>
    <alternativeName>
        <fullName>Archain</fullName>
    </alternativeName>
    <alternativeName>
        <fullName>Delta-coat protein</fullName>
        <shortName>Delta-COP</shortName>
    </alternativeName>
</protein>
<accession>P48444</accession>
<accession>B4E1X2</accession>
<accession>E9PEU4</accession>
<accession>Q52M80</accession>
<sequence length="511" mass="57210">MVLLAAAVCTKAGKAIVSRQFVEMTRTRIEGLLAAFPKLMNTGKQHTFVETESVRYVYQPMEKLYMVLITTKNSNILEDLETLRLFSRVIPEYCRALEENEISEHCFDLIFAFDEIVALGYRENVNLAQIRTFTEMDSHEEKVFRAVRETQEREAKAEMRRKAKELQQARRDAERQGKKAPGFGGFGSSAVSGGSTAAMITETIIETDKPKVAPAPARPSGPSKALKLGAKGKEVDNFVDKLKSEGETIMSSSMGKRTSEATKMHAPPINMESVHMKIEEKITLTCGRDGGLQNMELHGMIMLRISDDKYGRIRLHVENEDKKGVQLQTHPNVDKKLFTAESLIGLKNPEKSFPVNSDVGVLKWRLQTTEESFIPLTINCWPSESGNGCDVNIEYELQEDNLELNDVVITIPLPSGVGAPVIGEIDGEYRHDSRRNTLEWCLPVIDAKNKSGSLEFSIAGQPNDFFPVQVSFVSKKNYCNIQVTKVTQVDGNSPVRFSTETTFLVDKYEIL</sequence>
<keyword id="KW-0007">Acetylation</keyword>
<keyword id="KW-0025">Alternative splicing</keyword>
<keyword id="KW-0963">Cytoplasm</keyword>
<keyword id="KW-0968">Cytoplasmic vesicle</keyword>
<keyword id="KW-0242">Dwarfism</keyword>
<keyword id="KW-0931">ER-Golgi transport</keyword>
<keyword id="KW-0333">Golgi apparatus</keyword>
<keyword id="KW-0472">Membrane</keyword>
<keyword id="KW-0597">Phosphoprotein</keyword>
<keyword id="KW-0653">Protein transport</keyword>
<keyword id="KW-1267">Proteomics identification</keyword>
<keyword id="KW-1185">Reference proteome</keyword>
<keyword id="KW-0813">Transport</keyword>
<proteinExistence type="evidence at protein level"/>